<sequence length="700" mass="80208">MNNLSYLEPDYSEFVEVDPTGRYGRYNEVLGKGASKTVYRAFDEYEGIEVAWNQVKLYDFLQSPEDLERLYCEIHLLKTLKHKNIMKFYTSWVDTANRNINFVTELFTSGTLRQYRLRHKRVNIRAMKHWCRQILRGLHYLHSHDPPVIHRDLKCDNIFVNGNQGEVKIGDLGLAAILRKSHAAHCVGTPEFMAPEVYEEAYNELVDIYSFGMCILEMVTFDYPYSECTHPAQIYKKVMSGKKPDALYKVKDPEVKCFIEKCLATVSLRVSARELLDDPFLRIDDGEFDLRSVDMEDSVGPLYRQPHHLPDYYNYPSNSSSLNRQYSNGNYPSNSSSLNRQYSNGYNSHHEYQNGWAYNPAETEETHGIELFESRNNDDQEEEKKSGNVDITIKGKRRDDGGLFLRLRIADKEGRVRNIYFPFDIETDTALSVATEMVAELDMDDHGVTKIANMIDGEISSLVPSWRPGPEFEECLAAAAAANAASICNNCVSNRTSMGSVMDFLRTNPGANVIQCCRNGCGETHGRFEEITIRETEVRLRELWKLQQQQESRELSSIDSGHNHSEEEEEEEVLYEDPENMFSCEAGNEINHISGSGSFSFMPSKYCDEPSEKTENQVQQELRWLKAKCQIELRDIQDEQLKTRWPESGEEVEISPKDGFLGSVSGLGREEDTVKEMFGERLVPKCLKRTTSLPVDAIDS</sequence>
<organism>
    <name type="scientific">Arabidopsis thaliana</name>
    <name type="common">Mouse-ear cress</name>
    <dbReference type="NCBI Taxonomy" id="3702"/>
    <lineage>
        <taxon>Eukaryota</taxon>
        <taxon>Viridiplantae</taxon>
        <taxon>Streptophyta</taxon>
        <taxon>Embryophyta</taxon>
        <taxon>Tracheophyta</taxon>
        <taxon>Spermatophyta</taxon>
        <taxon>Magnoliopsida</taxon>
        <taxon>eudicotyledons</taxon>
        <taxon>Gunneridae</taxon>
        <taxon>Pentapetalae</taxon>
        <taxon>rosids</taxon>
        <taxon>malvids</taxon>
        <taxon>Brassicales</taxon>
        <taxon>Brassicaceae</taxon>
        <taxon>Camelineae</taxon>
        <taxon>Arabidopsis</taxon>
    </lineage>
</organism>
<reference key="1">
    <citation type="journal article" date="2002" name="Biosci. Biotechnol. Biochem.">
        <title>Compilation and characterization of a novel WNK family of protein kinases in Arabiodpsis thaliana with reference to circadian rhythms.</title>
        <authorList>
            <person name="Nakamichi N."/>
            <person name="Murakami-Kojima M."/>
            <person name="Sato E."/>
            <person name="Kishi Y."/>
            <person name="Yamashino T."/>
            <person name="Mizuno T."/>
        </authorList>
    </citation>
    <scope>NUCLEOTIDE SEQUENCE [MRNA]</scope>
    <scope>FUNCTION</scope>
    <scope>INDUCTION</scope>
    <source>
        <strain>cv. Columbia</strain>
    </source>
</reference>
<reference key="2">
    <citation type="journal article" date="2000" name="Nature">
        <title>Sequence and analysis of chromosome 3 of the plant Arabidopsis thaliana.</title>
        <authorList>
            <person name="Salanoubat M."/>
            <person name="Lemcke K."/>
            <person name="Rieger M."/>
            <person name="Ansorge W."/>
            <person name="Unseld M."/>
            <person name="Fartmann B."/>
            <person name="Valle G."/>
            <person name="Bloecker H."/>
            <person name="Perez-Alonso M."/>
            <person name="Obermaier B."/>
            <person name="Delseny M."/>
            <person name="Boutry M."/>
            <person name="Grivell L.A."/>
            <person name="Mache R."/>
            <person name="Puigdomenech P."/>
            <person name="De Simone V."/>
            <person name="Choisne N."/>
            <person name="Artiguenave F."/>
            <person name="Robert C."/>
            <person name="Brottier P."/>
            <person name="Wincker P."/>
            <person name="Cattolico L."/>
            <person name="Weissenbach J."/>
            <person name="Saurin W."/>
            <person name="Quetier F."/>
            <person name="Schaefer M."/>
            <person name="Mueller-Auer S."/>
            <person name="Gabel C."/>
            <person name="Fuchs M."/>
            <person name="Benes V."/>
            <person name="Wurmbach E."/>
            <person name="Drzonek H."/>
            <person name="Erfle H."/>
            <person name="Jordan N."/>
            <person name="Bangert S."/>
            <person name="Wiedelmann R."/>
            <person name="Kranz H."/>
            <person name="Voss H."/>
            <person name="Holland R."/>
            <person name="Brandt P."/>
            <person name="Nyakatura G."/>
            <person name="Vezzi A."/>
            <person name="D'Angelo M."/>
            <person name="Pallavicini A."/>
            <person name="Toppo S."/>
            <person name="Simionati B."/>
            <person name="Conrad A."/>
            <person name="Hornischer K."/>
            <person name="Kauer G."/>
            <person name="Loehnert T.-H."/>
            <person name="Nordsiek G."/>
            <person name="Reichelt J."/>
            <person name="Scharfe M."/>
            <person name="Schoen O."/>
            <person name="Bargues M."/>
            <person name="Terol J."/>
            <person name="Climent J."/>
            <person name="Navarro P."/>
            <person name="Collado C."/>
            <person name="Perez-Perez A."/>
            <person name="Ottenwaelder B."/>
            <person name="Duchemin D."/>
            <person name="Cooke R."/>
            <person name="Laudie M."/>
            <person name="Berger-Llauro C."/>
            <person name="Purnelle B."/>
            <person name="Masuy D."/>
            <person name="de Haan M."/>
            <person name="Maarse A.C."/>
            <person name="Alcaraz J.-P."/>
            <person name="Cottet A."/>
            <person name="Casacuberta E."/>
            <person name="Monfort A."/>
            <person name="Argiriou A."/>
            <person name="Flores M."/>
            <person name="Liguori R."/>
            <person name="Vitale D."/>
            <person name="Mannhaupt G."/>
            <person name="Haase D."/>
            <person name="Schoof H."/>
            <person name="Rudd S."/>
            <person name="Zaccaria P."/>
            <person name="Mewes H.-W."/>
            <person name="Mayer K.F.X."/>
            <person name="Kaul S."/>
            <person name="Town C.D."/>
            <person name="Koo H.L."/>
            <person name="Tallon L.J."/>
            <person name="Jenkins J."/>
            <person name="Rooney T."/>
            <person name="Rizzo M."/>
            <person name="Walts A."/>
            <person name="Utterback T."/>
            <person name="Fujii C.Y."/>
            <person name="Shea T.P."/>
            <person name="Creasy T.H."/>
            <person name="Haas B."/>
            <person name="Maiti R."/>
            <person name="Wu D."/>
            <person name="Peterson J."/>
            <person name="Van Aken S."/>
            <person name="Pai G."/>
            <person name="Militscher J."/>
            <person name="Sellers P."/>
            <person name="Gill J.E."/>
            <person name="Feldblyum T.V."/>
            <person name="Preuss D."/>
            <person name="Lin X."/>
            <person name="Nierman W.C."/>
            <person name="Salzberg S.L."/>
            <person name="White O."/>
            <person name="Venter J.C."/>
            <person name="Fraser C.M."/>
            <person name="Kaneko T."/>
            <person name="Nakamura Y."/>
            <person name="Sato S."/>
            <person name="Kato T."/>
            <person name="Asamizu E."/>
            <person name="Sasamoto S."/>
            <person name="Kimura T."/>
            <person name="Idesawa K."/>
            <person name="Kawashima K."/>
            <person name="Kishida Y."/>
            <person name="Kiyokawa C."/>
            <person name="Kohara M."/>
            <person name="Matsumoto M."/>
            <person name="Matsuno A."/>
            <person name="Muraki A."/>
            <person name="Nakayama S."/>
            <person name="Nakazaki N."/>
            <person name="Shinpo S."/>
            <person name="Takeuchi C."/>
            <person name="Wada T."/>
            <person name="Watanabe A."/>
            <person name="Yamada M."/>
            <person name="Yasuda M."/>
            <person name="Tabata S."/>
        </authorList>
    </citation>
    <scope>NUCLEOTIDE SEQUENCE [LARGE SCALE GENOMIC DNA]</scope>
    <source>
        <strain>cv. Columbia</strain>
    </source>
</reference>
<reference key="3">
    <citation type="journal article" date="2017" name="Plant J.">
        <title>Araport11: a complete reannotation of the Arabidopsis thaliana reference genome.</title>
        <authorList>
            <person name="Cheng C.Y."/>
            <person name="Krishnakumar V."/>
            <person name="Chan A.P."/>
            <person name="Thibaud-Nissen F."/>
            <person name="Schobel S."/>
            <person name="Town C.D."/>
        </authorList>
    </citation>
    <scope>GENOME REANNOTATION</scope>
    <source>
        <strain>cv. Columbia</strain>
    </source>
</reference>
<reference key="4">
    <citation type="journal article" date="2002" name="Plant Cell Physiol.">
        <title>The APRR3 component of the clock-associated APRR1/TOC1 quintet is phosphorylated by a novel protein kinase belonging to the WNK family, the gene for which is also transcribed rhythmically in Arabidopsis thaliana.</title>
        <authorList>
            <person name="Murakami-Kojima M."/>
            <person name="Nakamichi N."/>
            <person name="Yamashino T."/>
            <person name="Mizuno T."/>
        </authorList>
    </citation>
    <scope>FUNCTION</scope>
    <scope>INDUCTION</scope>
    <scope>AUTOPHOSPHORYLATION</scope>
</reference>
<reference key="5">
    <citation type="journal article" date="2008" name="Plant Biol.">
        <title>The plant WNK gene family and regulation of flowering time in Arabidopsis.</title>
        <authorList>
            <person name="Wang Y."/>
            <person name="Liu K."/>
            <person name="Liao H."/>
            <person name="Zhuang C."/>
            <person name="Ma H."/>
            <person name="Yan X."/>
        </authorList>
    </citation>
    <scope>FUNCTION</scope>
    <scope>DISRUPTION PHENOTYPE</scope>
</reference>
<reference key="6">
    <citation type="journal article" date="2009" name="Plant Physiol.">
        <title>Large-scale Arabidopsis phosphoproteome profiling reveals novel chloroplast kinase substrates and phosphorylation networks.</title>
        <authorList>
            <person name="Reiland S."/>
            <person name="Messerli G."/>
            <person name="Baerenfaller K."/>
            <person name="Gerrits B."/>
            <person name="Endler A."/>
            <person name="Grossmann J."/>
            <person name="Gruissem W."/>
            <person name="Baginsky S."/>
        </authorList>
    </citation>
    <scope>IDENTIFICATION BY MASS SPECTROMETRY [LARGE SCALE ANALYSIS]</scope>
</reference>
<evidence type="ECO:0000250" key="1">
    <source>
        <dbReference type="UniProtKB" id="Q9H4A3"/>
    </source>
</evidence>
<evidence type="ECO:0000250" key="2">
    <source>
        <dbReference type="UniProtKB" id="Q9JIH7"/>
    </source>
</evidence>
<evidence type="ECO:0000255" key="3">
    <source>
        <dbReference type="PROSITE-ProRule" id="PRU00159"/>
    </source>
</evidence>
<evidence type="ECO:0000256" key="4">
    <source>
        <dbReference type="SAM" id="MobiDB-lite"/>
    </source>
</evidence>
<evidence type="ECO:0000269" key="5">
    <source>
    </source>
</evidence>
<evidence type="ECO:0000269" key="6">
    <source>
    </source>
</evidence>
<evidence type="ECO:0000269" key="7">
    <source>
    </source>
</evidence>
<dbReference type="EC" id="2.7.11.1"/>
<dbReference type="EMBL" id="AB084266">
    <property type="protein sequence ID" value="BAB91125.1"/>
    <property type="molecule type" value="mRNA"/>
</dbReference>
<dbReference type="EMBL" id="AC009465">
    <property type="protein sequence ID" value="AAG51416.1"/>
    <property type="molecule type" value="Genomic_DNA"/>
</dbReference>
<dbReference type="EMBL" id="CP002686">
    <property type="protein sequence ID" value="AEE74155.1"/>
    <property type="molecule type" value="Genomic_DNA"/>
</dbReference>
<dbReference type="RefSeq" id="NP_187142.1">
    <molecule id="Q9CAV6-1"/>
    <property type="nucleotide sequence ID" value="NM_111363.4"/>
</dbReference>
<dbReference type="SMR" id="Q9CAV6"/>
<dbReference type="BioGRID" id="4986">
    <property type="interactions" value="2"/>
</dbReference>
<dbReference type="FunCoup" id="Q9CAV6">
    <property type="interactions" value="1476"/>
</dbReference>
<dbReference type="STRING" id="3702.Q9CAV6"/>
<dbReference type="iPTMnet" id="Q9CAV6"/>
<dbReference type="PaxDb" id="3702-AT3G04910.1"/>
<dbReference type="ProteomicsDB" id="242677">
    <molecule id="Q9CAV6-1"/>
</dbReference>
<dbReference type="EnsemblPlants" id="AT3G04910.1">
    <molecule id="Q9CAV6-1"/>
    <property type="protein sequence ID" value="AT3G04910.1"/>
    <property type="gene ID" value="AT3G04910"/>
</dbReference>
<dbReference type="GeneID" id="819651"/>
<dbReference type="Gramene" id="AT3G04910.1">
    <molecule id="Q9CAV6-1"/>
    <property type="protein sequence ID" value="AT3G04910.1"/>
    <property type="gene ID" value="AT3G04910"/>
</dbReference>
<dbReference type="KEGG" id="ath:AT3G04910"/>
<dbReference type="Araport" id="AT3G04910"/>
<dbReference type="TAIR" id="AT3G04910">
    <property type="gene designation" value="WNK1"/>
</dbReference>
<dbReference type="eggNOG" id="KOG0584">
    <property type="taxonomic scope" value="Eukaryota"/>
</dbReference>
<dbReference type="HOGENOM" id="CLU_000288_142_2_1"/>
<dbReference type="InParanoid" id="Q9CAV6"/>
<dbReference type="OMA" id="HYEYDTS"/>
<dbReference type="PhylomeDB" id="Q9CAV6"/>
<dbReference type="PRO" id="PR:Q9CAV6"/>
<dbReference type="Proteomes" id="UP000006548">
    <property type="component" value="Chromosome 3"/>
</dbReference>
<dbReference type="ExpressionAtlas" id="Q9CAV6">
    <property type="expression patterns" value="baseline and differential"/>
</dbReference>
<dbReference type="GO" id="GO:0005524">
    <property type="term" value="F:ATP binding"/>
    <property type="evidence" value="ECO:0007669"/>
    <property type="project" value="UniProtKB-KW"/>
</dbReference>
<dbReference type="GO" id="GO:0004672">
    <property type="term" value="F:protein kinase activity"/>
    <property type="evidence" value="ECO:0000314"/>
    <property type="project" value="TAIR"/>
</dbReference>
<dbReference type="GO" id="GO:0106310">
    <property type="term" value="F:protein serine kinase activity"/>
    <property type="evidence" value="ECO:0007669"/>
    <property type="project" value="RHEA"/>
</dbReference>
<dbReference type="GO" id="GO:0004674">
    <property type="term" value="F:protein serine/threonine kinase activity"/>
    <property type="evidence" value="ECO:0000250"/>
    <property type="project" value="TAIR"/>
</dbReference>
<dbReference type="GO" id="GO:0007623">
    <property type="term" value="P:circadian rhythm"/>
    <property type="evidence" value="ECO:0000270"/>
    <property type="project" value="TAIR"/>
</dbReference>
<dbReference type="GO" id="GO:0006468">
    <property type="term" value="P:protein phosphorylation"/>
    <property type="evidence" value="ECO:0000314"/>
    <property type="project" value="TAIR"/>
</dbReference>
<dbReference type="CDD" id="cd13983">
    <property type="entry name" value="STKc_WNK"/>
    <property type="match status" value="1"/>
</dbReference>
<dbReference type="FunFam" id="3.30.200.20:FF:000075">
    <property type="entry name" value="Probable serine/threonine-protein kinase WNK1"/>
    <property type="match status" value="1"/>
</dbReference>
<dbReference type="FunFam" id="1.10.510.10:FF:000046">
    <property type="entry name" value="probable serine/threonine-protein kinase WNK9"/>
    <property type="match status" value="1"/>
</dbReference>
<dbReference type="Gene3D" id="3.30.200.20">
    <property type="entry name" value="Phosphorylase Kinase, domain 1"/>
    <property type="match status" value="1"/>
</dbReference>
<dbReference type="Gene3D" id="1.10.510.10">
    <property type="entry name" value="Transferase(Phosphotransferase) domain 1"/>
    <property type="match status" value="1"/>
</dbReference>
<dbReference type="InterPro" id="IPR011009">
    <property type="entry name" value="Kinase-like_dom_sf"/>
</dbReference>
<dbReference type="InterPro" id="IPR000719">
    <property type="entry name" value="Prot_kinase_dom"/>
</dbReference>
<dbReference type="InterPro" id="IPR008271">
    <property type="entry name" value="Ser/Thr_kinase_AS"/>
</dbReference>
<dbReference type="InterPro" id="IPR050588">
    <property type="entry name" value="WNK_Ser-Thr_kinase"/>
</dbReference>
<dbReference type="PANTHER" id="PTHR13902">
    <property type="entry name" value="SERINE/THREONINE-PROTEIN KINASE WNK WITH NO LYSINE -RELATED"/>
    <property type="match status" value="1"/>
</dbReference>
<dbReference type="Pfam" id="PF00069">
    <property type="entry name" value="Pkinase"/>
    <property type="match status" value="1"/>
</dbReference>
<dbReference type="SMART" id="SM00220">
    <property type="entry name" value="S_TKc"/>
    <property type="match status" value="1"/>
</dbReference>
<dbReference type="SUPFAM" id="SSF56112">
    <property type="entry name" value="Protein kinase-like (PK-like)"/>
    <property type="match status" value="1"/>
</dbReference>
<dbReference type="PROSITE" id="PS50011">
    <property type="entry name" value="PROTEIN_KINASE_DOM"/>
    <property type="match status" value="1"/>
</dbReference>
<dbReference type="PROSITE" id="PS00108">
    <property type="entry name" value="PROTEIN_KINASE_ST"/>
    <property type="match status" value="1"/>
</dbReference>
<protein>
    <recommendedName>
        <fullName>Serine/threonine-protein kinase WNK1</fullName>
        <shortName>AtWNK1</shortName>
        <ecNumber>2.7.11.1</ecNumber>
    </recommendedName>
    <alternativeName>
        <fullName>Protein kinase with no lysine 1</fullName>
    </alternativeName>
</protein>
<comment type="function">
    <text evidence="5 6 7">Regulates flowering time by modulating the photoperiod pathway. Phosphorylates APRR3.</text>
</comment>
<comment type="catalytic activity">
    <reaction>
        <text>L-seryl-[protein] + ATP = O-phospho-L-seryl-[protein] + ADP + H(+)</text>
        <dbReference type="Rhea" id="RHEA:17989"/>
        <dbReference type="Rhea" id="RHEA-COMP:9863"/>
        <dbReference type="Rhea" id="RHEA-COMP:11604"/>
        <dbReference type="ChEBI" id="CHEBI:15378"/>
        <dbReference type="ChEBI" id="CHEBI:29999"/>
        <dbReference type="ChEBI" id="CHEBI:30616"/>
        <dbReference type="ChEBI" id="CHEBI:83421"/>
        <dbReference type="ChEBI" id="CHEBI:456216"/>
        <dbReference type="EC" id="2.7.11.1"/>
    </reaction>
</comment>
<comment type="catalytic activity">
    <reaction>
        <text>L-threonyl-[protein] + ATP = O-phospho-L-threonyl-[protein] + ADP + H(+)</text>
        <dbReference type="Rhea" id="RHEA:46608"/>
        <dbReference type="Rhea" id="RHEA-COMP:11060"/>
        <dbReference type="Rhea" id="RHEA-COMP:11605"/>
        <dbReference type="ChEBI" id="CHEBI:15378"/>
        <dbReference type="ChEBI" id="CHEBI:30013"/>
        <dbReference type="ChEBI" id="CHEBI:30616"/>
        <dbReference type="ChEBI" id="CHEBI:61977"/>
        <dbReference type="ChEBI" id="CHEBI:456216"/>
        <dbReference type="EC" id="2.7.11.1"/>
    </reaction>
</comment>
<comment type="alternative products">
    <event type="alternative splicing"/>
    <isoform>
        <id>Q9CAV6-1</id>
        <name>1</name>
        <sequence type="displayed"/>
    </isoform>
    <text>A number of isoforms are produced. According to EST sequences.</text>
</comment>
<comment type="induction">
    <text evidence="5 6">Expressed with a circadian rhythm showing a peak in the evening.</text>
</comment>
<comment type="PTM">
    <text>Autophosphorylated.</text>
</comment>
<comment type="disruption phenotype">
    <text evidence="7">Plants display delayed flowering and altered expression of genes involved in the photoperiod flowering pathway, such as ELF4, TOC1, CO and FT.</text>
</comment>
<comment type="similarity">
    <text evidence="3">Belongs to the protein kinase superfamily. Ser/Thr protein kinase family. WNK subfamily.</text>
</comment>
<comment type="caution">
    <text evidence="1">Was named WNK/'with no lysine(K)' because key residues for catalysis, including the lysine involved in ATP binding, are either not conserved or differ compared to the residues described in other kinase family proteins.</text>
</comment>
<name>WNK1_ARATH</name>
<feature type="chain" id="PRO_0000351659" description="Serine/threonine-protein kinase WNK1">
    <location>
        <begin position="1"/>
        <end position="700"/>
    </location>
</feature>
<feature type="domain" description="Protein kinase" evidence="3">
    <location>
        <begin position="24"/>
        <end position="281"/>
    </location>
</feature>
<feature type="region of interest" description="Disordered" evidence="4">
    <location>
        <begin position="314"/>
        <end position="345"/>
    </location>
</feature>
<feature type="region of interest" description="Disordered" evidence="4">
    <location>
        <begin position="551"/>
        <end position="575"/>
    </location>
</feature>
<feature type="region of interest" description="Disordered" evidence="4">
    <location>
        <begin position="647"/>
        <end position="666"/>
    </location>
</feature>
<feature type="compositionally biased region" description="Low complexity" evidence="4">
    <location>
        <begin position="314"/>
        <end position="339"/>
    </location>
</feature>
<feature type="compositionally biased region" description="Basic and acidic residues" evidence="4">
    <location>
        <begin position="551"/>
        <end position="565"/>
    </location>
</feature>
<feature type="compositionally biased region" description="Acidic residues" evidence="4">
    <location>
        <begin position="566"/>
        <end position="575"/>
    </location>
</feature>
<feature type="active site" description="Proton acceptor" evidence="2">
    <location>
        <position position="171"/>
    </location>
</feature>
<feature type="binding site" evidence="1">
    <location>
        <begin position="104"/>
        <end position="107"/>
    </location>
    <ligand>
        <name>ATP</name>
        <dbReference type="ChEBI" id="CHEBI:30616"/>
    </ligand>
</feature>
<feature type="binding site" evidence="1">
    <location>
        <position position="154"/>
    </location>
    <ligand>
        <name>ATP</name>
        <dbReference type="ChEBI" id="CHEBI:30616"/>
    </ligand>
</feature>
<proteinExistence type="evidence at protein level"/>
<gene>
    <name type="primary">WNK1</name>
    <name type="ordered locus">At3g04910</name>
    <name type="ORF">T9J14.14</name>
</gene>
<keyword id="KW-0025">Alternative splicing</keyword>
<keyword id="KW-0067">ATP-binding</keyword>
<keyword id="KW-0418">Kinase</keyword>
<keyword id="KW-0547">Nucleotide-binding</keyword>
<keyword id="KW-0597">Phosphoprotein</keyword>
<keyword id="KW-1185">Reference proteome</keyword>
<keyword id="KW-0723">Serine/threonine-protein kinase</keyword>
<keyword id="KW-0808">Transferase</keyword>
<accession>Q9CAV6</accession>